<accession>B3LS52</accession>
<comment type="subcellular location">
    <subcellularLocation>
        <location evidence="2">Membrane</location>
        <topology evidence="2">Multi-pass membrane protein</topology>
    </subcellularLocation>
</comment>
<comment type="similarity">
    <text evidence="2">Belongs to the TPT transporter family. SLC35D subfamily.</text>
</comment>
<comment type="caution">
    <text evidence="2">This is a truncated version of GDP-mannose transporter 2. This strain has a stop codon in position 73, which disrupts the gene coding for this protein and produces two ORFs. A contiguous sequence for GDP-mannose transporter 2 can be found in strain Lalvin EC1118 (AC C8Z742).</text>
</comment>
<organism>
    <name type="scientific">Saccharomyces cerevisiae (strain RM11-1a)</name>
    <name type="common">Baker's yeast</name>
    <dbReference type="NCBI Taxonomy" id="285006"/>
    <lineage>
        <taxon>Eukaryota</taxon>
        <taxon>Fungi</taxon>
        <taxon>Dikarya</taxon>
        <taxon>Ascomycota</taxon>
        <taxon>Saccharomycotina</taxon>
        <taxon>Saccharomycetes</taxon>
        <taxon>Saccharomycetales</taxon>
        <taxon>Saccharomycetaceae</taxon>
        <taxon>Saccharomyces</taxon>
    </lineage>
</organism>
<dbReference type="EMBL" id="CH408052">
    <property type="protein sequence ID" value="EDV08868.1"/>
    <property type="molecule type" value="Genomic_DNA"/>
</dbReference>
<dbReference type="SMR" id="B3LS52"/>
<dbReference type="HOGENOM" id="CLU_2723613_0_0_1"/>
<dbReference type="Proteomes" id="UP000008335">
    <property type="component" value="Unassembled WGS sequence"/>
</dbReference>
<dbReference type="GO" id="GO:0016020">
    <property type="term" value="C:membrane"/>
    <property type="evidence" value="ECO:0007669"/>
    <property type="project" value="UniProtKB-SubCell"/>
</dbReference>
<reference key="1">
    <citation type="submission" date="2005-03" db="EMBL/GenBank/DDBJ databases">
        <title>Annotation of the Saccharomyces cerevisiae RM11-1a genome.</title>
        <authorList>
            <consortium name="The Broad Institute Genome Sequencing Platform"/>
            <person name="Birren B.W."/>
            <person name="Lander E.S."/>
            <person name="Galagan J.E."/>
            <person name="Nusbaum C."/>
            <person name="Devon K."/>
            <person name="Cuomo C."/>
            <person name="Jaffe D.B."/>
            <person name="Butler J."/>
            <person name="Alvarez P."/>
            <person name="Gnerre S."/>
            <person name="Grabherr M."/>
            <person name="Kleber M."/>
            <person name="Mauceli E.W."/>
            <person name="Brockman W."/>
            <person name="MacCallum I.A."/>
            <person name="Rounsley S."/>
            <person name="Young S.K."/>
            <person name="LaButti K."/>
            <person name="Pushparaj V."/>
            <person name="DeCaprio D."/>
            <person name="Crawford M."/>
            <person name="Koehrsen M."/>
            <person name="Engels R."/>
            <person name="Montgomery P."/>
            <person name="Pearson M."/>
            <person name="Howarth C."/>
            <person name="Larson L."/>
            <person name="Luoma S."/>
            <person name="White J."/>
            <person name="O'Leary S."/>
            <person name="Kodira C.D."/>
            <person name="Zeng Q."/>
            <person name="Yandava C."/>
            <person name="Alvarado L."/>
            <person name="Pratt S."/>
            <person name="Kruglyak L."/>
        </authorList>
    </citation>
    <scope>NUCLEOTIDE SEQUENCE [LARGE SCALE GENOMIC DNA]</scope>
    <source>
        <strain>RM11-1a</strain>
    </source>
</reference>
<proteinExistence type="inferred from homology"/>
<sequence>MSKHKHEWTESVANSGPASILSYCASSILMTVTNKFVVNLDNFNMNFVMLFVQSLVCTVTLCILRIVGVANF</sequence>
<gene>
    <name type="ORF">SCRG_04509</name>
</gene>
<protein>
    <recommendedName>
        <fullName>Uncharacterized protein SCRG_04509</fullName>
    </recommendedName>
</protein>
<name>YR039_YEAS1</name>
<feature type="chain" id="PRO_0000391666" description="Uncharacterized protein SCRG_04509">
    <location>
        <begin position="1"/>
        <end position="72"/>
    </location>
</feature>
<feature type="topological domain" description="Cytoplasmic" evidence="1">
    <location>
        <begin position="1"/>
        <end position="12"/>
    </location>
</feature>
<feature type="transmembrane region" description="Helical" evidence="1">
    <location>
        <begin position="13"/>
        <end position="32"/>
    </location>
</feature>
<feature type="topological domain" description="Lumenal" evidence="1">
    <location>
        <begin position="33"/>
        <end position="46"/>
    </location>
</feature>
<feature type="transmembrane region" description="Helical" evidence="1">
    <location>
        <begin position="47"/>
        <end position="69"/>
    </location>
</feature>
<feature type="topological domain" description="Cytoplasmic" evidence="1">
    <location>
        <begin position="70"/>
        <end position="72"/>
    </location>
</feature>
<evidence type="ECO:0000255" key="1"/>
<evidence type="ECO:0000305" key="2"/>
<keyword id="KW-0472">Membrane</keyword>
<keyword id="KW-0812">Transmembrane</keyword>
<keyword id="KW-1133">Transmembrane helix</keyword>